<evidence type="ECO:0000255" key="1">
    <source>
        <dbReference type="HAMAP-Rule" id="MF_00019"/>
    </source>
</evidence>
<organism>
    <name type="scientific">Staphylococcus aureus (strain USA300 / TCH1516)</name>
    <dbReference type="NCBI Taxonomy" id="451516"/>
    <lineage>
        <taxon>Bacteria</taxon>
        <taxon>Bacillati</taxon>
        <taxon>Bacillota</taxon>
        <taxon>Bacilli</taxon>
        <taxon>Bacillales</taxon>
        <taxon>Staphylococcaceae</taxon>
        <taxon>Staphylococcus</taxon>
    </lineage>
</organism>
<dbReference type="EC" id="2.3.1.274" evidence="1"/>
<dbReference type="EMBL" id="CP000730">
    <property type="protein sequence ID" value="ABX29180.1"/>
    <property type="molecule type" value="Genomic_DNA"/>
</dbReference>
<dbReference type="RefSeq" id="WP_000239744.1">
    <property type="nucleotide sequence ID" value="NC_010079.1"/>
</dbReference>
<dbReference type="SMR" id="A8Z3R4"/>
<dbReference type="KEGG" id="sax:USA300HOU_1165"/>
<dbReference type="HOGENOM" id="CLU_039379_1_1_9"/>
<dbReference type="UniPathway" id="UPA00085"/>
<dbReference type="GO" id="GO:0005737">
    <property type="term" value="C:cytoplasm"/>
    <property type="evidence" value="ECO:0007669"/>
    <property type="project" value="UniProtKB-SubCell"/>
</dbReference>
<dbReference type="GO" id="GO:0043811">
    <property type="term" value="F:phosphate:acyl-[acyl carrier protein] acyltransferase activity"/>
    <property type="evidence" value="ECO:0007669"/>
    <property type="project" value="UniProtKB-UniRule"/>
</dbReference>
<dbReference type="GO" id="GO:0006633">
    <property type="term" value="P:fatty acid biosynthetic process"/>
    <property type="evidence" value="ECO:0007669"/>
    <property type="project" value="UniProtKB-UniRule"/>
</dbReference>
<dbReference type="GO" id="GO:0008654">
    <property type="term" value="P:phospholipid biosynthetic process"/>
    <property type="evidence" value="ECO:0007669"/>
    <property type="project" value="UniProtKB-KW"/>
</dbReference>
<dbReference type="Gene3D" id="3.40.718.10">
    <property type="entry name" value="Isopropylmalate Dehydrogenase"/>
    <property type="match status" value="1"/>
</dbReference>
<dbReference type="HAMAP" id="MF_00019">
    <property type="entry name" value="PlsX"/>
    <property type="match status" value="1"/>
</dbReference>
<dbReference type="InterPro" id="IPR003664">
    <property type="entry name" value="FA_synthesis"/>
</dbReference>
<dbReference type="InterPro" id="IPR012281">
    <property type="entry name" value="Phospholipid_synth_PlsX-like"/>
</dbReference>
<dbReference type="NCBIfam" id="TIGR00182">
    <property type="entry name" value="plsX"/>
    <property type="match status" value="1"/>
</dbReference>
<dbReference type="PANTHER" id="PTHR30100">
    <property type="entry name" value="FATTY ACID/PHOSPHOLIPID SYNTHESIS PROTEIN PLSX"/>
    <property type="match status" value="1"/>
</dbReference>
<dbReference type="PANTHER" id="PTHR30100:SF1">
    <property type="entry name" value="PHOSPHATE ACYLTRANSFERASE"/>
    <property type="match status" value="1"/>
</dbReference>
<dbReference type="Pfam" id="PF02504">
    <property type="entry name" value="FA_synthesis"/>
    <property type="match status" value="1"/>
</dbReference>
<dbReference type="PIRSF" id="PIRSF002465">
    <property type="entry name" value="Phsphlp_syn_PlsX"/>
    <property type="match status" value="1"/>
</dbReference>
<dbReference type="SUPFAM" id="SSF53659">
    <property type="entry name" value="Isocitrate/Isopropylmalate dehydrogenase-like"/>
    <property type="match status" value="1"/>
</dbReference>
<comment type="function">
    <text evidence="1">Catalyzes the reversible formation of acyl-phosphate (acyl-PO(4)) from acyl-[acyl-carrier-protein] (acyl-ACP). This enzyme utilizes acyl-ACP as fatty acyl donor, but not acyl-CoA.</text>
</comment>
<comment type="catalytic activity">
    <reaction evidence="1">
        <text>a fatty acyl-[ACP] + phosphate = an acyl phosphate + holo-[ACP]</text>
        <dbReference type="Rhea" id="RHEA:42292"/>
        <dbReference type="Rhea" id="RHEA-COMP:9685"/>
        <dbReference type="Rhea" id="RHEA-COMP:14125"/>
        <dbReference type="ChEBI" id="CHEBI:43474"/>
        <dbReference type="ChEBI" id="CHEBI:59918"/>
        <dbReference type="ChEBI" id="CHEBI:64479"/>
        <dbReference type="ChEBI" id="CHEBI:138651"/>
        <dbReference type="EC" id="2.3.1.274"/>
    </reaction>
</comment>
<comment type="pathway">
    <text evidence="1">Lipid metabolism; phospholipid metabolism.</text>
</comment>
<comment type="subunit">
    <text evidence="1">Homodimer. Probably interacts with PlsY.</text>
</comment>
<comment type="subcellular location">
    <subcellularLocation>
        <location evidence="1">Cytoplasm</location>
    </subcellularLocation>
    <text evidence="1">Associated with the membrane possibly through PlsY.</text>
</comment>
<comment type="similarity">
    <text evidence="1">Belongs to the PlsX family.</text>
</comment>
<protein>
    <recommendedName>
        <fullName evidence="1">Phosphate acyltransferase</fullName>
        <ecNumber evidence="1">2.3.1.274</ecNumber>
    </recommendedName>
    <alternativeName>
        <fullName evidence="1">Acyl-ACP phosphotransacylase</fullName>
    </alternativeName>
    <alternativeName>
        <fullName evidence="1">Acyl-[acyl-carrier-protein]--phosphate acyltransferase</fullName>
    </alternativeName>
    <alternativeName>
        <fullName evidence="1">Phosphate-acyl-ACP acyltransferase</fullName>
    </alternativeName>
</protein>
<keyword id="KW-0963">Cytoplasm</keyword>
<keyword id="KW-0444">Lipid biosynthesis</keyword>
<keyword id="KW-0443">Lipid metabolism</keyword>
<keyword id="KW-0594">Phospholipid biosynthesis</keyword>
<keyword id="KW-1208">Phospholipid metabolism</keyword>
<keyword id="KW-0808">Transferase</keyword>
<reference key="1">
    <citation type="journal article" date="2007" name="BMC Microbiol.">
        <title>Subtle genetic changes enhance virulence of methicillin resistant and sensitive Staphylococcus aureus.</title>
        <authorList>
            <person name="Highlander S.K."/>
            <person name="Hulten K.G."/>
            <person name="Qin X."/>
            <person name="Jiang H."/>
            <person name="Yerrapragada S."/>
            <person name="Mason E.O. Jr."/>
            <person name="Shang Y."/>
            <person name="Williams T.M."/>
            <person name="Fortunov R.M."/>
            <person name="Liu Y."/>
            <person name="Igboeli O."/>
            <person name="Petrosino J."/>
            <person name="Tirumalai M."/>
            <person name="Uzman A."/>
            <person name="Fox G.E."/>
            <person name="Cardenas A.M."/>
            <person name="Muzny D.M."/>
            <person name="Hemphill L."/>
            <person name="Ding Y."/>
            <person name="Dugan S."/>
            <person name="Blyth P.R."/>
            <person name="Buhay C.J."/>
            <person name="Dinh H.H."/>
            <person name="Hawes A.C."/>
            <person name="Holder M."/>
            <person name="Kovar C.L."/>
            <person name="Lee S.L."/>
            <person name="Liu W."/>
            <person name="Nazareth L.V."/>
            <person name="Wang Q."/>
            <person name="Zhou J."/>
            <person name="Kaplan S.L."/>
            <person name="Weinstock G.M."/>
        </authorList>
    </citation>
    <scope>NUCLEOTIDE SEQUENCE [LARGE SCALE GENOMIC DNA]</scope>
    <source>
        <strain>USA300 / TCH1516</strain>
    </source>
</reference>
<name>PLSX_STAAT</name>
<gene>
    <name evidence="1" type="primary">plsX</name>
    <name type="ordered locus">USA300HOU_1165</name>
</gene>
<sequence>MVKLAIDMMGGDNAPDIVLEAVQKAVEDFKDLEIILFGDEKKYNLNHERIEFRHCSEKIEMEDEPVRAIKRKKDSSMVKMAEAVKSGEADGCVSAGNTGALMSAGLFIVGRIKGVARPALVVTLPTIDGKGFVFLDVGANADAKPEHLLQYAQLGDIYAQKIRGIDNPKISLLNIGTEPAKGNSLTKKSYELLNHDHSLNFVGNIEAKTLMDGDTDVVVTDGYTGNMVLKNLEGTAKSIGKMLKDTIMSSTKNKLAGAILKKDLAEFAKKMDYSEYGGSVLLGLEGTVVKAHGSSNAKAFYSAIRQAKIAGEQNIVQTMKETVGESNE</sequence>
<accession>A8Z3R4</accession>
<feature type="chain" id="PRO_1000074177" description="Phosphate acyltransferase">
    <location>
        <begin position="1"/>
        <end position="328"/>
    </location>
</feature>
<proteinExistence type="inferred from homology"/>